<protein>
    <recommendedName>
        <fullName evidence="1">Flavin-dependent thymidylate synthase</fullName>
        <shortName evidence="1">FDTS</shortName>
        <ecNumber evidence="1">2.1.1.148</ecNumber>
    </recommendedName>
    <alternativeName>
        <fullName evidence="1">FAD-dependent thymidylate synthase</fullName>
    </alternativeName>
    <alternativeName>
        <fullName evidence="1">Thymidylate synthase ThyX</fullName>
        <shortName evidence="1">TS</shortName>
        <shortName evidence="1">TSase</shortName>
    </alternativeName>
</protein>
<comment type="function">
    <text evidence="1">Catalyzes the reductive methylation of 2'-deoxyuridine-5'-monophosphate (dUMP) to 2'-deoxythymidine-5'-monophosphate (dTMP) while utilizing 5,10-methylenetetrahydrofolate (mTHF) as the methyl donor, and NADPH and FADH(2) as the reductant.</text>
</comment>
<comment type="catalytic activity">
    <reaction evidence="1">
        <text>dUMP + (6R)-5,10-methylene-5,6,7,8-tetrahydrofolate + NADPH + H(+) = dTMP + (6S)-5,6,7,8-tetrahydrofolate + NADP(+)</text>
        <dbReference type="Rhea" id="RHEA:29043"/>
        <dbReference type="ChEBI" id="CHEBI:15378"/>
        <dbReference type="ChEBI" id="CHEBI:15636"/>
        <dbReference type="ChEBI" id="CHEBI:57453"/>
        <dbReference type="ChEBI" id="CHEBI:57783"/>
        <dbReference type="ChEBI" id="CHEBI:58349"/>
        <dbReference type="ChEBI" id="CHEBI:63528"/>
        <dbReference type="ChEBI" id="CHEBI:246422"/>
        <dbReference type="EC" id="2.1.1.148"/>
    </reaction>
</comment>
<comment type="cofactor">
    <cofactor evidence="1">
        <name>FAD</name>
        <dbReference type="ChEBI" id="CHEBI:57692"/>
    </cofactor>
    <text evidence="1">Binds 4 FAD per tetramer. Each FAD binding site is formed by three monomers.</text>
</comment>
<comment type="pathway">
    <text evidence="1">Pyrimidine metabolism; dTTP biosynthesis.</text>
</comment>
<comment type="subunit">
    <text evidence="1">Homotetramer.</text>
</comment>
<comment type="similarity">
    <text evidence="1">Belongs to the thymidylate synthase ThyX family.</text>
</comment>
<gene>
    <name evidence="1" type="primary">thyX</name>
    <name type="ordered locus">STK_22150</name>
</gene>
<feature type="chain" id="PRO_0000175598" description="Flavin-dependent thymidylate synthase">
    <location>
        <begin position="1"/>
        <end position="257"/>
    </location>
</feature>
<feature type="domain" description="ThyX" evidence="2">
    <location>
        <begin position="1"/>
        <end position="202"/>
    </location>
</feature>
<feature type="short sequence motif" description="ThyX motif" evidence="1">
    <location>
        <begin position="79"/>
        <end position="89"/>
    </location>
</feature>
<feature type="active site" description="Involved in ionization of N3 of dUMP, leading to its activation" evidence="1">
    <location>
        <position position="168"/>
    </location>
</feature>
<feature type="binding site" evidence="1">
    <location>
        <position position="55"/>
    </location>
    <ligand>
        <name>FAD</name>
        <dbReference type="ChEBI" id="CHEBI:57692"/>
        <note>ligand shared between neighboring subunits</note>
    </ligand>
</feature>
<feature type="binding site" evidence="1">
    <location>
        <begin position="76"/>
        <end position="79"/>
    </location>
    <ligand>
        <name>dUMP</name>
        <dbReference type="ChEBI" id="CHEBI:246422"/>
        <note>ligand shared between dimeric partners</note>
    </ligand>
</feature>
<feature type="binding site" evidence="1">
    <location>
        <begin position="79"/>
        <end position="81"/>
    </location>
    <ligand>
        <name>FAD</name>
        <dbReference type="ChEBI" id="CHEBI:57692"/>
        <note>ligand shared between neighboring subunits</note>
    </ligand>
</feature>
<feature type="binding site" description="in other chain" evidence="1">
    <location>
        <begin position="87"/>
        <end position="91"/>
    </location>
    <ligand>
        <name>dUMP</name>
        <dbReference type="ChEBI" id="CHEBI:246422"/>
        <note>ligand shared between dimeric partners</note>
    </ligand>
</feature>
<feature type="binding site" evidence="1">
    <location>
        <position position="87"/>
    </location>
    <ligand>
        <name>FAD</name>
        <dbReference type="ChEBI" id="CHEBI:57692"/>
        <note>ligand shared between neighboring subunits</note>
    </ligand>
</feature>
<feature type="binding site" description="in other chain" evidence="1">
    <location>
        <position position="141"/>
    </location>
    <ligand>
        <name>dUMP</name>
        <dbReference type="ChEBI" id="CHEBI:246422"/>
        <note>ligand shared between dimeric partners</note>
    </ligand>
</feature>
<feature type="binding site" evidence="1">
    <location>
        <begin position="157"/>
        <end position="159"/>
    </location>
    <ligand>
        <name>FAD</name>
        <dbReference type="ChEBI" id="CHEBI:57692"/>
        <note>ligand shared between neighboring subunits</note>
    </ligand>
</feature>
<feature type="binding site" evidence="1">
    <location>
        <position position="163"/>
    </location>
    <ligand>
        <name>FAD</name>
        <dbReference type="ChEBI" id="CHEBI:57692"/>
        <note>ligand shared between neighboring subunits</note>
    </ligand>
</feature>
<feature type="binding site" evidence="1">
    <location>
        <position position="168"/>
    </location>
    <ligand>
        <name>dUMP</name>
        <dbReference type="ChEBI" id="CHEBI:246422"/>
        <note>ligand shared between dimeric partners</note>
    </ligand>
</feature>
<accession>Q96YF6</accession>
<sequence length="257" mass="30344">MNVKLVSYTRDGEKVVAIASKMSRSRKGWDYHEKTMTDEEIEVWIRDAILHGYWSVLEHSIYTFSIEGISRVASHQLVRHRVASYTQMSHRFAKPIDEYYKPITPPSIEKRAKEIIEKAYQEAYENYFKLLQDGVPEEDARYVLPNGVNTNIVVTMNARELYNFFALRLCSRAQWEIRAIAWKMLEEVKKVHPRLFRYVGPNCIIHENFIRNEPITLDEVLQKDNIEFISQRCIEGVMRDGILKCIRNSKHVLEYLK</sequence>
<reference key="1">
    <citation type="journal article" date="2001" name="DNA Res.">
        <title>Complete genome sequence of an aerobic thermoacidophilic Crenarchaeon, Sulfolobus tokodaii strain7.</title>
        <authorList>
            <person name="Kawarabayasi Y."/>
            <person name="Hino Y."/>
            <person name="Horikawa H."/>
            <person name="Jin-no K."/>
            <person name="Takahashi M."/>
            <person name="Sekine M."/>
            <person name="Baba S."/>
            <person name="Ankai A."/>
            <person name="Kosugi H."/>
            <person name="Hosoyama A."/>
            <person name="Fukui S."/>
            <person name="Nagai Y."/>
            <person name="Nishijima K."/>
            <person name="Otsuka R."/>
            <person name="Nakazawa H."/>
            <person name="Takamiya M."/>
            <person name="Kato Y."/>
            <person name="Yoshizawa T."/>
            <person name="Tanaka T."/>
            <person name="Kudoh Y."/>
            <person name="Yamazaki J."/>
            <person name="Kushida N."/>
            <person name="Oguchi A."/>
            <person name="Aoki K."/>
            <person name="Masuda S."/>
            <person name="Yanagii M."/>
            <person name="Nishimura M."/>
            <person name="Yamagishi A."/>
            <person name="Oshima T."/>
            <person name="Kikuchi H."/>
        </authorList>
    </citation>
    <scope>NUCLEOTIDE SEQUENCE [LARGE SCALE GENOMIC DNA]</scope>
    <source>
        <strain>DSM 16993 / JCM 10545 / NBRC 100140 / 7</strain>
    </source>
</reference>
<evidence type="ECO:0000255" key="1">
    <source>
        <dbReference type="HAMAP-Rule" id="MF_01408"/>
    </source>
</evidence>
<evidence type="ECO:0000255" key="2">
    <source>
        <dbReference type="PROSITE-ProRule" id="PRU00661"/>
    </source>
</evidence>
<organism>
    <name type="scientific">Sulfurisphaera tokodaii (strain DSM 16993 / JCM 10545 / NBRC 100140 / 7)</name>
    <name type="common">Sulfolobus tokodaii</name>
    <dbReference type="NCBI Taxonomy" id="273063"/>
    <lineage>
        <taxon>Archaea</taxon>
        <taxon>Thermoproteota</taxon>
        <taxon>Thermoprotei</taxon>
        <taxon>Sulfolobales</taxon>
        <taxon>Sulfolobaceae</taxon>
        <taxon>Sulfurisphaera</taxon>
    </lineage>
</organism>
<proteinExistence type="inferred from homology"/>
<keyword id="KW-0274">FAD</keyword>
<keyword id="KW-0285">Flavoprotein</keyword>
<keyword id="KW-0489">Methyltransferase</keyword>
<keyword id="KW-0521">NADP</keyword>
<keyword id="KW-0545">Nucleotide biosynthesis</keyword>
<keyword id="KW-1185">Reference proteome</keyword>
<keyword id="KW-0808">Transferase</keyword>
<name>THYX_SULTO</name>
<dbReference type="EC" id="2.1.1.148" evidence="1"/>
<dbReference type="EMBL" id="BA000023">
    <property type="protein sequence ID" value="BAB67321.1"/>
    <property type="molecule type" value="Genomic_DNA"/>
</dbReference>
<dbReference type="RefSeq" id="WP_010980296.1">
    <property type="nucleotide sequence ID" value="NC_003106.2"/>
</dbReference>
<dbReference type="SMR" id="Q96YF6"/>
<dbReference type="STRING" id="273063.STK_22150"/>
<dbReference type="GeneID" id="1460292"/>
<dbReference type="KEGG" id="sto:STK_22150"/>
<dbReference type="PATRIC" id="fig|273063.9.peg.2512"/>
<dbReference type="eggNOG" id="arCOG01883">
    <property type="taxonomic scope" value="Archaea"/>
</dbReference>
<dbReference type="OrthoDB" id="18918at2157"/>
<dbReference type="UniPathway" id="UPA00575"/>
<dbReference type="Proteomes" id="UP000001015">
    <property type="component" value="Chromosome"/>
</dbReference>
<dbReference type="GO" id="GO:0050660">
    <property type="term" value="F:flavin adenine dinucleotide binding"/>
    <property type="evidence" value="ECO:0007669"/>
    <property type="project" value="InterPro"/>
</dbReference>
<dbReference type="GO" id="GO:0070402">
    <property type="term" value="F:NADPH binding"/>
    <property type="evidence" value="ECO:0007669"/>
    <property type="project" value="TreeGrafter"/>
</dbReference>
<dbReference type="GO" id="GO:0050797">
    <property type="term" value="F:thymidylate synthase (FAD) activity"/>
    <property type="evidence" value="ECO:0007669"/>
    <property type="project" value="UniProtKB-UniRule"/>
</dbReference>
<dbReference type="GO" id="GO:0004799">
    <property type="term" value="F:thymidylate synthase activity"/>
    <property type="evidence" value="ECO:0007669"/>
    <property type="project" value="TreeGrafter"/>
</dbReference>
<dbReference type="GO" id="GO:0006231">
    <property type="term" value="P:dTMP biosynthetic process"/>
    <property type="evidence" value="ECO:0007669"/>
    <property type="project" value="UniProtKB-UniRule"/>
</dbReference>
<dbReference type="GO" id="GO:0006235">
    <property type="term" value="P:dTTP biosynthetic process"/>
    <property type="evidence" value="ECO:0007669"/>
    <property type="project" value="UniProtKB-UniRule"/>
</dbReference>
<dbReference type="GO" id="GO:0032259">
    <property type="term" value="P:methylation"/>
    <property type="evidence" value="ECO:0007669"/>
    <property type="project" value="UniProtKB-KW"/>
</dbReference>
<dbReference type="CDD" id="cd20175">
    <property type="entry name" value="ThyX"/>
    <property type="match status" value="1"/>
</dbReference>
<dbReference type="FunFam" id="3.30.1360.170:FF:000004">
    <property type="entry name" value="Flavin-dependent thymidylate synthase"/>
    <property type="match status" value="1"/>
</dbReference>
<dbReference type="Gene3D" id="3.30.1360.170">
    <property type="match status" value="1"/>
</dbReference>
<dbReference type="HAMAP" id="MF_01408">
    <property type="entry name" value="ThyX"/>
    <property type="match status" value="1"/>
</dbReference>
<dbReference type="InterPro" id="IPR003669">
    <property type="entry name" value="Thymidylate_synthase_ThyX"/>
</dbReference>
<dbReference type="InterPro" id="IPR036098">
    <property type="entry name" value="Thymidylate_synthase_ThyX_sf"/>
</dbReference>
<dbReference type="NCBIfam" id="TIGR02170">
    <property type="entry name" value="thyX"/>
    <property type="match status" value="1"/>
</dbReference>
<dbReference type="PANTHER" id="PTHR34934">
    <property type="entry name" value="FLAVIN-DEPENDENT THYMIDYLATE SYNTHASE"/>
    <property type="match status" value="1"/>
</dbReference>
<dbReference type="PANTHER" id="PTHR34934:SF1">
    <property type="entry name" value="FLAVIN-DEPENDENT THYMIDYLATE SYNTHASE"/>
    <property type="match status" value="1"/>
</dbReference>
<dbReference type="Pfam" id="PF02511">
    <property type="entry name" value="Thy1"/>
    <property type="match status" value="1"/>
</dbReference>
<dbReference type="SUPFAM" id="SSF69796">
    <property type="entry name" value="Thymidylate synthase-complementing protein Thy1"/>
    <property type="match status" value="1"/>
</dbReference>
<dbReference type="PROSITE" id="PS51331">
    <property type="entry name" value="THYX"/>
    <property type="match status" value="1"/>
</dbReference>